<comment type="function">
    <text evidence="1">Transaldolase is important for the balance of metabolites in the pentose-phosphate pathway.</text>
</comment>
<comment type="catalytic activity">
    <reaction evidence="1">
        <text>D-sedoheptulose 7-phosphate + D-glyceraldehyde 3-phosphate = D-erythrose 4-phosphate + beta-D-fructose 6-phosphate</text>
        <dbReference type="Rhea" id="RHEA:17053"/>
        <dbReference type="ChEBI" id="CHEBI:16897"/>
        <dbReference type="ChEBI" id="CHEBI:57483"/>
        <dbReference type="ChEBI" id="CHEBI:57634"/>
        <dbReference type="ChEBI" id="CHEBI:59776"/>
        <dbReference type="EC" id="2.2.1.2"/>
    </reaction>
</comment>
<comment type="pathway">
    <text evidence="1">Carbohydrate degradation; pentose phosphate pathway; D-glyceraldehyde 3-phosphate and beta-D-fructose 6-phosphate from D-ribose 5-phosphate and D-xylulose 5-phosphate (non-oxidative stage): step 2/3.</text>
</comment>
<comment type="subcellular location">
    <subcellularLocation>
        <location evidence="1">Cytoplasm</location>
    </subcellularLocation>
</comment>
<comment type="similarity">
    <text evidence="1 3">Belongs to the transaldolase family. Type 1 subfamily.</text>
</comment>
<accession>Q7NK81</accession>
<reference key="1">
    <citation type="journal article" date="2003" name="DNA Res.">
        <title>Complete genome structure of Gloeobacter violaceus PCC 7421, a cyanobacterium that lacks thylakoids.</title>
        <authorList>
            <person name="Nakamura Y."/>
            <person name="Kaneko T."/>
            <person name="Sato S."/>
            <person name="Mimuro M."/>
            <person name="Miyashita H."/>
            <person name="Tsuchiya T."/>
            <person name="Sasamoto S."/>
            <person name="Watanabe A."/>
            <person name="Kawashima K."/>
            <person name="Kishida Y."/>
            <person name="Kiyokawa C."/>
            <person name="Kohara M."/>
            <person name="Matsumoto M."/>
            <person name="Matsuno A."/>
            <person name="Nakazaki N."/>
            <person name="Shimpo S."/>
            <person name="Takeuchi C."/>
            <person name="Yamada M."/>
            <person name="Tabata S."/>
        </authorList>
    </citation>
    <scope>NUCLEOTIDE SEQUENCE [LARGE SCALE GENOMIC DNA]</scope>
    <source>
        <strain>ATCC 29082 / PCC 7421</strain>
    </source>
</reference>
<feature type="chain" id="PRO_0000173597" description="Transaldolase">
    <location>
        <begin position="1"/>
        <end position="389"/>
    </location>
</feature>
<feature type="domain" description="EF-hand 1">
    <location>
        <begin position="330"/>
        <end position="365"/>
    </location>
</feature>
<feature type="domain" description="EF-hand 2">
    <location>
        <begin position="365"/>
        <end position="388"/>
    </location>
</feature>
<feature type="active site" description="Schiff-base intermediate with substrate" evidence="1">
    <location>
        <position position="136"/>
    </location>
</feature>
<feature type="binding site" evidence="2">
    <location>
        <position position="343"/>
    </location>
    <ligand>
        <name>Ca(2+)</name>
        <dbReference type="ChEBI" id="CHEBI:29108"/>
        <label>1</label>
    </ligand>
</feature>
<feature type="binding site" evidence="2">
    <location>
        <position position="345"/>
    </location>
    <ligand>
        <name>Ca(2+)</name>
        <dbReference type="ChEBI" id="CHEBI:29108"/>
        <label>1</label>
    </ligand>
</feature>
<feature type="binding site" evidence="2">
    <location>
        <position position="347"/>
    </location>
    <ligand>
        <name>Ca(2+)</name>
        <dbReference type="ChEBI" id="CHEBI:29108"/>
        <label>1</label>
    </ligand>
</feature>
<feature type="binding site" evidence="2">
    <location>
        <position position="354"/>
    </location>
    <ligand>
        <name>Ca(2+)</name>
        <dbReference type="ChEBI" id="CHEBI:29108"/>
        <label>1</label>
    </ligand>
</feature>
<feature type="binding site" evidence="2">
    <location>
        <position position="366"/>
    </location>
    <ligand>
        <name>Ca(2+)</name>
        <dbReference type="ChEBI" id="CHEBI:29108"/>
        <label>2</label>
    </ligand>
</feature>
<feature type="binding site" evidence="2">
    <location>
        <position position="368"/>
    </location>
    <ligand>
        <name>Ca(2+)</name>
        <dbReference type="ChEBI" id="CHEBI:29108"/>
        <label>2</label>
    </ligand>
</feature>
<feature type="binding site" evidence="2">
    <location>
        <position position="370"/>
    </location>
    <ligand>
        <name>Ca(2+)</name>
        <dbReference type="ChEBI" id="CHEBI:29108"/>
        <label>2</label>
    </ligand>
</feature>
<feature type="binding site" evidence="2">
    <location>
        <position position="372"/>
    </location>
    <ligand>
        <name>Ca(2+)</name>
        <dbReference type="ChEBI" id="CHEBI:29108"/>
        <label>2</label>
    </ligand>
</feature>
<feature type="binding site" evidence="2">
    <location>
        <position position="377"/>
    </location>
    <ligand>
        <name>Ca(2+)</name>
        <dbReference type="ChEBI" id="CHEBI:29108"/>
        <label>2</label>
    </ligand>
</feature>
<name>TAL_GLOVI</name>
<evidence type="ECO:0000255" key="1">
    <source>
        <dbReference type="HAMAP-Rule" id="MF_00492"/>
    </source>
</evidence>
<evidence type="ECO:0000255" key="2">
    <source>
        <dbReference type="PROSITE-ProRule" id="PRU10142"/>
    </source>
</evidence>
<evidence type="ECO:0000305" key="3"/>
<proteinExistence type="inferred from homology"/>
<keyword id="KW-0106">Calcium</keyword>
<keyword id="KW-0963">Cytoplasm</keyword>
<keyword id="KW-0479">Metal-binding</keyword>
<keyword id="KW-0570">Pentose shunt</keyword>
<keyword id="KW-1185">Reference proteome</keyword>
<keyword id="KW-0677">Repeat</keyword>
<keyword id="KW-0704">Schiff base</keyword>
<keyword id="KW-0808">Transferase</keyword>
<gene>
    <name evidence="1" type="primary">tal</name>
    <name type="ordered locus">gll1597</name>
</gene>
<organism>
    <name type="scientific">Gloeobacter violaceus (strain ATCC 29082 / PCC 7421)</name>
    <dbReference type="NCBI Taxonomy" id="251221"/>
    <lineage>
        <taxon>Bacteria</taxon>
        <taxon>Bacillati</taxon>
        <taxon>Cyanobacteriota</taxon>
        <taxon>Cyanophyceae</taxon>
        <taxon>Gloeobacterales</taxon>
        <taxon>Gloeobacteraceae</taxon>
        <taxon>Gloeobacter</taxon>
    </lineage>
</organism>
<dbReference type="EC" id="2.2.1.2" evidence="1"/>
<dbReference type="EMBL" id="BA000045">
    <property type="protein sequence ID" value="BAC89538.1"/>
    <property type="molecule type" value="Genomic_DNA"/>
</dbReference>
<dbReference type="RefSeq" id="NP_924543.1">
    <property type="nucleotide sequence ID" value="NC_005125.1"/>
</dbReference>
<dbReference type="RefSeq" id="WP_011141596.1">
    <property type="nucleotide sequence ID" value="NC_005125.1"/>
</dbReference>
<dbReference type="SMR" id="Q7NK81"/>
<dbReference type="STRING" id="251221.gene:10759087"/>
<dbReference type="EnsemblBacteria" id="BAC89538">
    <property type="protein sequence ID" value="BAC89538"/>
    <property type="gene ID" value="BAC89538"/>
</dbReference>
<dbReference type="KEGG" id="gvi:gll1597"/>
<dbReference type="PATRIC" id="fig|251221.4.peg.1634"/>
<dbReference type="eggNOG" id="COG0176">
    <property type="taxonomic scope" value="Bacteria"/>
</dbReference>
<dbReference type="HOGENOM" id="CLU_047470_0_1_3"/>
<dbReference type="InParanoid" id="Q7NK81"/>
<dbReference type="OrthoDB" id="9807051at2"/>
<dbReference type="PhylomeDB" id="Q7NK81"/>
<dbReference type="UniPathway" id="UPA00115">
    <property type="reaction ID" value="UER00414"/>
</dbReference>
<dbReference type="Proteomes" id="UP000000557">
    <property type="component" value="Chromosome"/>
</dbReference>
<dbReference type="GO" id="GO:0005737">
    <property type="term" value="C:cytoplasm"/>
    <property type="evidence" value="ECO:0007669"/>
    <property type="project" value="UniProtKB-SubCell"/>
</dbReference>
<dbReference type="GO" id="GO:0005509">
    <property type="term" value="F:calcium ion binding"/>
    <property type="evidence" value="ECO:0007669"/>
    <property type="project" value="InterPro"/>
</dbReference>
<dbReference type="GO" id="GO:0004801">
    <property type="term" value="F:transaldolase activity"/>
    <property type="evidence" value="ECO:0000250"/>
    <property type="project" value="UniProtKB"/>
</dbReference>
<dbReference type="GO" id="GO:0005975">
    <property type="term" value="P:carbohydrate metabolic process"/>
    <property type="evidence" value="ECO:0007669"/>
    <property type="project" value="InterPro"/>
</dbReference>
<dbReference type="GO" id="GO:0006098">
    <property type="term" value="P:pentose-phosphate shunt"/>
    <property type="evidence" value="ECO:0007669"/>
    <property type="project" value="UniProtKB-UniRule"/>
</dbReference>
<dbReference type="CDD" id="cd00051">
    <property type="entry name" value="EFh"/>
    <property type="match status" value="1"/>
</dbReference>
<dbReference type="CDD" id="cd00957">
    <property type="entry name" value="Transaldolase_TalAB"/>
    <property type="match status" value="1"/>
</dbReference>
<dbReference type="FunFam" id="3.20.20.70:FF:000002">
    <property type="entry name" value="Transaldolase"/>
    <property type="match status" value="1"/>
</dbReference>
<dbReference type="Gene3D" id="3.20.20.70">
    <property type="entry name" value="Aldolase class I"/>
    <property type="match status" value="1"/>
</dbReference>
<dbReference type="Gene3D" id="1.10.238.10">
    <property type="entry name" value="EF-hand"/>
    <property type="match status" value="1"/>
</dbReference>
<dbReference type="HAMAP" id="MF_00492">
    <property type="entry name" value="Transaldolase_1"/>
    <property type="match status" value="1"/>
</dbReference>
<dbReference type="InterPro" id="IPR013785">
    <property type="entry name" value="Aldolase_TIM"/>
</dbReference>
<dbReference type="InterPro" id="IPR011992">
    <property type="entry name" value="EF-hand-dom_pair"/>
</dbReference>
<dbReference type="InterPro" id="IPR018247">
    <property type="entry name" value="EF_Hand_1_Ca_BS"/>
</dbReference>
<dbReference type="InterPro" id="IPR002048">
    <property type="entry name" value="EF_hand_dom"/>
</dbReference>
<dbReference type="InterPro" id="IPR001585">
    <property type="entry name" value="TAL/FSA"/>
</dbReference>
<dbReference type="InterPro" id="IPR004730">
    <property type="entry name" value="Transaldolase_1"/>
</dbReference>
<dbReference type="InterPro" id="IPR018225">
    <property type="entry name" value="Transaldolase_AS"/>
</dbReference>
<dbReference type="NCBIfam" id="NF008965">
    <property type="entry name" value="PRK12309.1"/>
    <property type="match status" value="1"/>
</dbReference>
<dbReference type="NCBIfam" id="TIGR00874">
    <property type="entry name" value="talAB"/>
    <property type="match status" value="1"/>
</dbReference>
<dbReference type="PANTHER" id="PTHR10683">
    <property type="entry name" value="TRANSALDOLASE"/>
    <property type="match status" value="1"/>
</dbReference>
<dbReference type="PANTHER" id="PTHR10683:SF18">
    <property type="entry name" value="TRANSALDOLASE"/>
    <property type="match status" value="1"/>
</dbReference>
<dbReference type="Pfam" id="PF13202">
    <property type="entry name" value="EF-hand_5"/>
    <property type="match status" value="2"/>
</dbReference>
<dbReference type="Pfam" id="PF00923">
    <property type="entry name" value="TAL_FSA"/>
    <property type="match status" value="1"/>
</dbReference>
<dbReference type="SMART" id="SM00054">
    <property type="entry name" value="EFh"/>
    <property type="match status" value="2"/>
</dbReference>
<dbReference type="SUPFAM" id="SSF51569">
    <property type="entry name" value="Aldolase"/>
    <property type="match status" value="1"/>
</dbReference>
<dbReference type="SUPFAM" id="SSF47473">
    <property type="entry name" value="EF-hand"/>
    <property type="match status" value="1"/>
</dbReference>
<dbReference type="PROSITE" id="PS00018">
    <property type="entry name" value="EF_HAND_1"/>
    <property type="match status" value="2"/>
</dbReference>
<dbReference type="PROSITE" id="PS50222">
    <property type="entry name" value="EF_HAND_2"/>
    <property type="match status" value="2"/>
</dbReference>
<dbReference type="PROSITE" id="PS01054">
    <property type="entry name" value="TRANSALDOLASE_1"/>
    <property type="match status" value="1"/>
</dbReference>
<dbReference type="PROSITE" id="PS00958">
    <property type="entry name" value="TRANSALDOLASE_2"/>
    <property type="match status" value="1"/>
</dbReference>
<sequence>MTGSLLDQLRQMTIVVADTGDIQAIEQFTPRDATTNPSLITAAAQMPQYQQIVDDTLKQARAELGPEAKAAAVATLAFDRLAVAFGLKILAIVPGRVSTEVDARLSYDTEATIEKGRSLIAQYEAAGISRERVLIKIASTWEGIRAAEILEDEGIHCNLTLLFGVHQAIACAEAGVTLISPFVGRILDWYKKETGRDYEPHEDPGVVSVTTIYNYYKKFGYQTQVMGASFRNIGEIVELAGCDLLTISPKLLEQLQATDAELVRKLDPDQAAGLEIEKIDMDQATFEKRHAEDRMASEKLDEGIKGFTNALVALEKLLADRLARLEGEVALNQAFESIFRTFDLDGDGFITREEWMGTDAVFDAIDLNHDGKITAEELGAGIGAVSKLA</sequence>
<protein>
    <recommendedName>
        <fullName evidence="1">Transaldolase</fullName>
        <ecNumber evidence="1">2.2.1.2</ecNumber>
    </recommendedName>
</protein>